<sequence>MATAKLISQKAKAHAPSLSQATTAEKNSVLQAMAQQLKADADVLLQANQLDIANAKKNGLSDHLIDRLLLTKARIDAMATAIDHLIELPEPIGAVKEEIKRPNGLVIKEMVVPFGVVGMIYEARPNVTVDACTLAVKTGNAVVLRGSASALHSNKAIVHTLKKAFQNSPIHPDVIQLLEDTSKEEAANMMQLKSTIDVLIPRGGANLIQTVLQEATIPVIETGVGNCHVYVASSADPDMAFDIVVNAKTQRPSVCNACETLLVEQSFAKAHLPALVERLSAKGVSLVGNEGACTLDPRIAQANEDDWSTEYLDLRLAIRVVADTNEAIAHINQYGTKHSEAIITESLAERDTFFATVDAACVYHNASTRFTDGFEFGFGAEIGISTQKLHARGPMGLKALTTSKYGIYGEGQVKE</sequence>
<comment type="function">
    <text evidence="1">Catalyzes the NADPH-dependent reduction of L-glutamate 5-phosphate into L-glutamate 5-semialdehyde and phosphate. The product spontaneously undergoes cyclization to form 1-pyrroline-5-carboxylate.</text>
</comment>
<comment type="catalytic activity">
    <reaction evidence="1">
        <text>L-glutamate 5-semialdehyde + phosphate + NADP(+) = L-glutamyl 5-phosphate + NADPH + H(+)</text>
        <dbReference type="Rhea" id="RHEA:19541"/>
        <dbReference type="ChEBI" id="CHEBI:15378"/>
        <dbReference type="ChEBI" id="CHEBI:43474"/>
        <dbReference type="ChEBI" id="CHEBI:57783"/>
        <dbReference type="ChEBI" id="CHEBI:58066"/>
        <dbReference type="ChEBI" id="CHEBI:58274"/>
        <dbReference type="ChEBI" id="CHEBI:58349"/>
        <dbReference type="EC" id="1.2.1.41"/>
    </reaction>
</comment>
<comment type="pathway">
    <text evidence="1">Amino-acid biosynthesis; L-proline biosynthesis; L-glutamate 5-semialdehyde from L-glutamate: step 2/2.</text>
</comment>
<comment type="subcellular location">
    <subcellularLocation>
        <location evidence="1">Cytoplasm</location>
    </subcellularLocation>
</comment>
<comment type="similarity">
    <text evidence="1">Belongs to the gamma-glutamyl phosphate reductase family.</text>
</comment>
<proteinExistence type="inferred from homology"/>
<gene>
    <name evidence="1" type="primary">proA</name>
    <name type="ordered locus">ABC1766</name>
</gene>
<protein>
    <recommendedName>
        <fullName evidence="1">Gamma-glutamyl phosphate reductase</fullName>
        <shortName evidence="1">GPR</shortName>
        <ecNumber evidence="1">1.2.1.41</ecNumber>
    </recommendedName>
    <alternativeName>
        <fullName evidence="1">Glutamate-5-semialdehyde dehydrogenase</fullName>
    </alternativeName>
    <alternativeName>
        <fullName evidence="1">Glutamyl-gamma-semialdehyde dehydrogenase</fullName>
        <shortName evidence="1">GSA dehydrogenase</shortName>
    </alternativeName>
</protein>
<organism>
    <name type="scientific">Shouchella clausii (strain KSM-K16)</name>
    <name type="common">Alkalihalobacillus clausii</name>
    <dbReference type="NCBI Taxonomy" id="66692"/>
    <lineage>
        <taxon>Bacteria</taxon>
        <taxon>Bacillati</taxon>
        <taxon>Bacillota</taxon>
        <taxon>Bacilli</taxon>
        <taxon>Bacillales</taxon>
        <taxon>Bacillaceae</taxon>
        <taxon>Shouchella</taxon>
    </lineage>
</organism>
<dbReference type="EC" id="1.2.1.41" evidence="1"/>
<dbReference type="EMBL" id="AP006627">
    <property type="protein sequence ID" value="BAD64301.1"/>
    <property type="molecule type" value="Genomic_DNA"/>
</dbReference>
<dbReference type="RefSeq" id="WP_011246609.1">
    <property type="nucleotide sequence ID" value="NC_006582.1"/>
</dbReference>
<dbReference type="SMR" id="Q5WH54"/>
<dbReference type="STRING" id="66692.ABC1766"/>
<dbReference type="KEGG" id="bcl:ABC1766"/>
<dbReference type="eggNOG" id="COG0014">
    <property type="taxonomic scope" value="Bacteria"/>
</dbReference>
<dbReference type="HOGENOM" id="CLU_030231_0_0_9"/>
<dbReference type="OrthoDB" id="9809970at2"/>
<dbReference type="UniPathway" id="UPA00098">
    <property type="reaction ID" value="UER00360"/>
</dbReference>
<dbReference type="Proteomes" id="UP000001168">
    <property type="component" value="Chromosome"/>
</dbReference>
<dbReference type="GO" id="GO:0005737">
    <property type="term" value="C:cytoplasm"/>
    <property type="evidence" value="ECO:0007669"/>
    <property type="project" value="UniProtKB-SubCell"/>
</dbReference>
<dbReference type="GO" id="GO:0004350">
    <property type="term" value="F:glutamate-5-semialdehyde dehydrogenase activity"/>
    <property type="evidence" value="ECO:0007669"/>
    <property type="project" value="UniProtKB-UniRule"/>
</dbReference>
<dbReference type="GO" id="GO:0050661">
    <property type="term" value="F:NADP binding"/>
    <property type="evidence" value="ECO:0007669"/>
    <property type="project" value="InterPro"/>
</dbReference>
<dbReference type="GO" id="GO:0055129">
    <property type="term" value="P:L-proline biosynthetic process"/>
    <property type="evidence" value="ECO:0007669"/>
    <property type="project" value="UniProtKB-UniRule"/>
</dbReference>
<dbReference type="CDD" id="cd07079">
    <property type="entry name" value="ALDH_F18-19_ProA-GPR"/>
    <property type="match status" value="1"/>
</dbReference>
<dbReference type="FunFam" id="3.40.309.10:FF:000006">
    <property type="entry name" value="Gamma-glutamyl phosphate reductase"/>
    <property type="match status" value="1"/>
</dbReference>
<dbReference type="Gene3D" id="3.40.605.10">
    <property type="entry name" value="Aldehyde Dehydrogenase, Chain A, domain 1"/>
    <property type="match status" value="1"/>
</dbReference>
<dbReference type="Gene3D" id="3.40.309.10">
    <property type="entry name" value="Aldehyde Dehydrogenase, Chain A, domain 2"/>
    <property type="match status" value="1"/>
</dbReference>
<dbReference type="HAMAP" id="MF_00412">
    <property type="entry name" value="ProA"/>
    <property type="match status" value="1"/>
</dbReference>
<dbReference type="InterPro" id="IPR016161">
    <property type="entry name" value="Ald_DH/histidinol_DH"/>
</dbReference>
<dbReference type="InterPro" id="IPR016163">
    <property type="entry name" value="Ald_DH_C"/>
</dbReference>
<dbReference type="InterPro" id="IPR016162">
    <property type="entry name" value="Ald_DH_N"/>
</dbReference>
<dbReference type="InterPro" id="IPR015590">
    <property type="entry name" value="Aldehyde_DH_dom"/>
</dbReference>
<dbReference type="InterPro" id="IPR020593">
    <property type="entry name" value="G-glutamylP_reductase_CS"/>
</dbReference>
<dbReference type="InterPro" id="IPR012134">
    <property type="entry name" value="Glu-5-SA_DH"/>
</dbReference>
<dbReference type="InterPro" id="IPR000965">
    <property type="entry name" value="GPR_dom"/>
</dbReference>
<dbReference type="NCBIfam" id="NF001221">
    <property type="entry name" value="PRK00197.1"/>
    <property type="match status" value="1"/>
</dbReference>
<dbReference type="NCBIfam" id="TIGR00407">
    <property type="entry name" value="proA"/>
    <property type="match status" value="1"/>
</dbReference>
<dbReference type="PANTHER" id="PTHR11063:SF8">
    <property type="entry name" value="DELTA-1-PYRROLINE-5-CARBOXYLATE SYNTHASE"/>
    <property type="match status" value="1"/>
</dbReference>
<dbReference type="PANTHER" id="PTHR11063">
    <property type="entry name" value="GLUTAMATE SEMIALDEHYDE DEHYDROGENASE"/>
    <property type="match status" value="1"/>
</dbReference>
<dbReference type="Pfam" id="PF00171">
    <property type="entry name" value="Aldedh"/>
    <property type="match status" value="1"/>
</dbReference>
<dbReference type="PIRSF" id="PIRSF000151">
    <property type="entry name" value="GPR"/>
    <property type="match status" value="1"/>
</dbReference>
<dbReference type="SUPFAM" id="SSF53720">
    <property type="entry name" value="ALDH-like"/>
    <property type="match status" value="1"/>
</dbReference>
<dbReference type="PROSITE" id="PS01223">
    <property type="entry name" value="PROA"/>
    <property type="match status" value="1"/>
</dbReference>
<evidence type="ECO:0000255" key="1">
    <source>
        <dbReference type="HAMAP-Rule" id="MF_00412"/>
    </source>
</evidence>
<name>PROA_SHOC1</name>
<feature type="chain" id="PRO_0000189695" description="Gamma-glutamyl phosphate reductase">
    <location>
        <begin position="1"/>
        <end position="415"/>
    </location>
</feature>
<keyword id="KW-0028">Amino-acid biosynthesis</keyword>
<keyword id="KW-0963">Cytoplasm</keyword>
<keyword id="KW-0521">NADP</keyword>
<keyword id="KW-0560">Oxidoreductase</keyword>
<keyword id="KW-0641">Proline biosynthesis</keyword>
<keyword id="KW-1185">Reference proteome</keyword>
<reference key="1">
    <citation type="submission" date="2003-10" db="EMBL/GenBank/DDBJ databases">
        <title>The complete genome sequence of the alkaliphilic Bacillus clausii KSM-K16.</title>
        <authorList>
            <person name="Takaki Y."/>
            <person name="Kageyama Y."/>
            <person name="Shimamura S."/>
            <person name="Suzuki H."/>
            <person name="Nishi S."/>
            <person name="Hatada Y."/>
            <person name="Kawai S."/>
            <person name="Ito S."/>
            <person name="Horikoshi K."/>
        </authorList>
    </citation>
    <scope>NUCLEOTIDE SEQUENCE [LARGE SCALE GENOMIC DNA]</scope>
    <source>
        <strain>KSM-K16</strain>
    </source>
</reference>
<accession>Q5WH54</accession>